<reference key="1">
    <citation type="submission" date="2007-03" db="EMBL/GenBank/DDBJ databases">
        <authorList>
            <person name="Heidelberg J."/>
        </authorList>
    </citation>
    <scope>NUCLEOTIDE SEQUENCE [LARGE SCALE GENOMIC DNA]</scope>
    <source>
        <strain>ATCC 39541 / Classical Ogawa 395 / O395</strain>
    </source>
</reference>
<reference key="2">
    <citation type="journal article" date="2008" name="PLoS ONE">
        <title>A recalibrated molecular clock and independent origins for the cholera pandemic clones.</title>
        <authorList>
            <person name="Feng L."/>
            <person name="Reeves P.R."/>
            <person name="Lan R."/>
            <person name="Ren Y."/>
            <person name="Gao C."/>
            <person name="Zhou Z."/>
            <person name="Ren Y."/>
            <person name="Cheng J."/>
            <person name="Wang W."/>
            <person name="Wang J."/>
            <person name="Qian W."/>
            <person name="Li D."/>
            <person name="Wang L."/>
        </authorList>
    </citation>
    <scope>NUCLEOTIDE SEQUENCE [LARGE SCALE GENOMIC DNA]</scope>
    <source>
        <strain>ATCC 39541 / Classical Ogawa 395 / O395</strain>
    </source>
</reference>
<proteinExistence type="inferred from homology"/>
<feature type="chain" id="PRO_1000071011" description="Cobyric acid synthase">
    <location>
        <begin position="1"/>
        <end position="484"/>
    </location>
</feature>
<feature type="domain" description="GATase cobBQ-type" evidence="1">
    <location>
        <begin position="249"/>
        <end position="438"/>
    </location>
</feature>
<feature type="active site" description="Nucleophile" evidence="1">
    <location>
        <position position="330"/>
    </location>
</feature>
<feature type="active site" evidence="1">
    <location>
        <position position="430"/>
    </location>
</feature>
<dbReference type="EMBL" id="CP000626">
    <property type="protein sequence ID" value="ABQ19260.1"/>
    <property type="molecule type" value="Genomic_DNA"/>
</dbReference>
<dbReference type="EMBL" id="CP001236">
    <property type="protein sequence ID" value="ACP11419.1"/>
    <property type="status" value="ALT_INIT"/>
    <property type="molecule type" value="Genomic_DNA"/>
</dbReference>
<dbReference type="RefSeq" id="WP_000759054.1">
    <property type="nucleotide sequence ID" value="NZ_JAACZH010000013.1"/>
</dbReference>
<dbReference type="SMR" id="A5EZT5"/>
<dbReference type="KEGG" id="vco:VC0395_0666"/>
<dbReference type="KEGG" id="vcr:VC395_A0585"/>
<dbReference type="PATRIC" id="fig|345073.21.peg.3326"/>
<dbReference type="eggNOG" id="COG1492">
    <property type="taxonomic scope" value="Bacteria"/>
</dbReference>
<dbReference type="HOGENOM" id="CLU_019250_2_2_6"/>
<dbReference type="OrthoDB" id="9808302at2"/>
<dbReference type="UniPathway" id="UPA00148"/>
<dbReference type="Proteomes" id="UP000000249">
    <property type="component" value="Chromosome 1"/>
</dbReference>
<dbReference type="GO" id="GO:0015420">
    <property type="term" value="F:ABC-type vitamin B12 transporter activity"/>
    <property type="evidence" value="ECO:0007669"/>
    <property type="project" value="UniProtKB-UniRule"/>
</dbReference>
<dbReference type="GO" id="GO:0003824">
    <property type="term" value="F:catalytic activity"/>
    <property type="evidence" value="ECO:0007669"/>
    <property type="project" value="InterPro"/>
</dbReference>
<dbReference type="GO" id="GO:0009236">
    <property type="term" value="P:cobalamin biosynthetic process"/>
    <property type="evidence" value="ECO:0007669"/>
    <property type="project" value="UniProtKB-UniRule"/>
</dbReference>
<dbReference type="CDD" id="cd05389">
    <property type="entry name" value="CobQ_N"/>
    <property type="match status" value="1"/>
</dbReference>
<dbReference type="CDD" id="cd01750">
    <property type="entry name" value="GATase1_CobQ"/>
    <property type="match status" value="1"/>
</dbReference>
<dbReference type="FunFam" id="3.40.50.300:FF:002880">
    <property type="entry name" value="Cobyric acid synthase"/>
    <property type="match status" value="1"/>
</dbReference>
<dbReference type="FunFam" id="3.40.50.880:FF:000136">
    <property type="entry name" value="Cobyric acid synthase"/>
    <property type="match status" value="1"/>
</dbReference>
<dbReference type="Gene3D" id="3.40.50.880">
    <property type="match status" value="1"/>
</dbReference>
<dbReference type="Gene3D" id="3.40.50.300">
    <property type="entry name" value="P-loop containing nucleotide triphosphate hydrolases"/>
    <property type="match status" value="1"/>
</dbReference>
<dbReference type="HAMAP" id="MF_00028">
    <property type="entry name" value="CobQ"/>
    <property type="match status" value="1"/>
</dbReference>
<dbReference type="InterPro" id="IPR029062">
    <property type="entry name" value="Class_I_gatase-like"/>
</dbReference>
<dbReference type="InterPro" id="IPR002586">
    <property type="entry name" value="CobQ/CobB/MinD/ParA_Nub-bd_dom"/>
</dbReference>
<dbReference type="InterPro" id="IPR033949">
    <property type="entry name" value="CobQ_GATase1"/>
</dbReference>
<dbReference type="InterPro" id="IPR047045">
    <property type="entry name" value="CobQ_N"/>
</dbReference>
<dbReference type="InterPro" id="IPR004459">
    <property type="entry name" value="CobQ_synth"/>
</dbReference>
<dbReference type="InterPro" id="IPR011698">
    <property type="entry name" value="GATase_3"/>
</dbReference>
<dbReference type="InterPro" id="IPR027417">
    <property type="entry name" value="P-loop_NTPase"/>
</dbReference>
<dbReference type="NCBIfam" id="TIGR00313">
    <property type="entry name" value="cobQ"/>
    <property type="match status" value="1"/>
</dbReference>
<dbReference type="NCBIfam" id="NF001989">
    <property type="entry name" value="PRK00784.1"/>
    <property type="match status" value="1"/>
</dbReference>
<dbReference type="PANTHER" id="PTHR21343:SF1">
    <property type="entry name" value="COBYRIC ACID SYNTHASE"/>
    <property type="match status" value="1"/>
</dbReference>
<dbReference type="PANTHER" id="PTHR21343">
    <property type="entry name" value="DETHIOBIOTIN SYNTHETASE"/>
    <property type="match status" value="1"/>
</dbReference>
<dbReference type="Pfam" id="PF01656">
    <property type="entry name" value="CbiA"/>
    <property type="match status" value="1"/>
</dbReference>
<dbReference type="Pfam" id="PF07685">
    <property type="entry name" value="GATase_3"/>
    <property type="match status" value="1"/>
</dbReference>
<dbReference type="SUPFAM" id="SSF52317">
    <property type="entry name" value="Class I glutamine amidotransferase-like"/>
    <property type="match status" value="1"/>
</dbReference>
<dbReference type="SUPFAM" id="SSF52540">
    <property type="entry name" value="P-loop containing nucleoside triphosphate hydrolases"/>
    <property type="match status" value="1"/>
</dbReference>
<dbReference type="PROSITE" id="PS51274">
    <property type="entry name" value="GATASE_COBBQ"/>
    <property type="match status" value="1"/>
</dbReference>
<accession>A5EZT5</accession>
<accession>C3M5K6</accession>
<organism>
    <name type="scientific">Vibrio cholerae serotype O1 (strain ATCC 39541 / Classical Ogawa 395 / O395)</name>
    <dbReference type="NCBI Taxonomy" id="345073"/>
    <lineage>
        <taxon>Bacteria</taxon>
        <taxon>Pseudomonadati</taxon>
        <taxon>Pseudomonadota</taxon>
        <taxon>Gammaproteobacteria</taxon>
        <taxon>Vibrionales</taxon>
        <taxon>Vibrionaceae</taxon>
        <taxon>Vibrio</taxon>
    </lineage>
</organism>
<protein>
    <recommendedName>
        <fullName evidence="1">Cobyric acid synthase</fullName>
    </recommendedName>
</protein>
<comment type="function">
    <text evidence="1">Catalyzes amidations at positions B, D, E, and G on adenosylcobyrinic A,C-diamide. NH(2) groups are provided by glutamine, and one molecule of ATP is hydrogenolyzed for each amidation.</text>
</comment>
<comment type="pathway">
    <text evidence="1">Cofactor biosynthesis; adenosylcobalamin biosynthesis.</text>
</comment>
<comment type="similarity">
    <text evidence="1">Belongs to the CobB/CobQ family. CobQ subfamily.</text>
</comment>
<comment type="sequence caution" evidence="2">
    <conflict type="erroneous initiation">
        <sequence resource="EMBL-CDS" id="ACP11419"/>
    </conflict>
</comment>
<gene>
    <name evidence="1" type="primary">cobQ</name>
    <name type="ordered locus">VC0395_0666</name>
    <name type="ordered locus">VC395_A0585</name>
</gene>
<keyword id="KW-0169">Cobalamin biosynthesis</keyword>
<keyword id="KW-0315">Glutamine amidotransferase</keyword>
<sequence>MKKWLMVQGTTSDAGKSVLVAGLCRVLARRGIQVCPFKPQNMALNSAVTPDGGEIGRAQAVQAQACGIAPSVHMNPVLLKPNSDTGAQVILQGRALSNMEANAYHDYKKVAMDTVMDSFQRLQQEYEAIMIEGAGSPAEINLRENDIANMGFAEKADVPVIIVADIDRGGVFAHLYGTLALLSESEQARVKGFVINRFRGDIGLLQSGLDWLEQKTGKPVIGVLPYLHGFDLEAEDAIAAQQNLSADRQLRVAVPVFTRISNHTDFDPLRLNPNIDFRYVGQGESLSGADLIILPGSKSTRADLAYLRSQGWDKEILRHLRLGGKVMGICGGFQMLGEWVHDPLGIEGEAGSSEGLGLFAMQTELTAEKRLTNVQGHLTLDGQTVAAQGYEIHAGRSSWAADQKSPIILSDGSLDGLVSDCNQGFGTYLHGIFDRPETALRICQWAGAKEIEAYDHRAAQERAIDRIADAIEQHLNLTLLWPDL</sequence>
<evidence type="ECO:0000255" key="1">
    <source>
        <dbReference type="HAMAP-Rule" id="MF_00028"/>
    </source>
</evidence>
<evidence type="ECO:0000305" key="2"/>
<name>COBQ_VIBC3</name>